<protein>
    <recommendedName>
        <fullName evidence="4">Transcription factor AN6788</fullName>
    </recommendedName>
</protein>
<proteinExistence type="inferred from homology"/>
<accession>Q5AY42</accession>
<accession>C8V278</accession>
<evidence type="ECO:0000255" key="1">
    <source>
        <dbReference type="PROSITE-ProRule" id="PRU00227"/>
    </source>
</evidence>
<evidence type="ECO:0000256" key="2">
    <source>
        <dbReference type="SAM" id="MobiDB-lite"/>
    </source>
</evidence>
<evidence type="ECO:0000269" key="3">
    <source>
    </source>
</evidence>
<evidence type="ECO:0000303" key="4">
    <source>
    </source>
</evidence>
<evidence type="ECO:0000305" key="5">
    <source>
    </source>
</evidence>
<feature type="chain" id="PRO_0000461774" description="Transcription factor AN6788">
    <location>
        <begin position="1"/>
        <end position="645"/>
    </location>
</feature>
<feature type="DNA-binding region" description="Zn(2)-C6 fungal-type" evidence="1">
    <location>
        <begin position="25"/>
        <end position="52"/>
    </location>
</feature>
<feature type="region of interest" description="Disordered" evidence="2">
    <location>
        <begin position="1"/>
        <end position="21"/>
    </location>
</feature>
<feature type="region of interest" description="Disordered" evidence="2">
    <location>
        <begin position="113"/>
        <end position="170"/>
    </location>
</feature>
<feature type="compositionally biased region" description="Basic and acidic residues" evidence="2">
    <location>
        <begin position="113"/>
        <end position="131"/>
    </location>
</feature>
<comment type="function">
    <text evidence="3 5">Transcription factors AN6788 and AN6790 act in tandem to regulate the expression of the non-reducing polyketide synthase pkfA from the aspernidine A biosynthesis cluster (PubMed:39334518). They do not control the expression of the other genes involved in aspernidine A biosynthesis, nor do they regulate the expression of the highly reducing polyketide synthase AN6791 and the esterase AN6793 with which they are predicted to form a secondary metabolite biosynthesis cluster (Probable) (PubMed:39334518).</text>
</comment>
<comment type="subcellular location">
    <subcellularLocation>
        <location evidence="1">Nucleus</location>
    </subcellularLocation>
</comment>
<reference key="1">
    <citation type="journal article" date="2005" name="Nature">
        <title>Sequencing of Aspergillus nidulans and comparative analysis with A. fumigatus and A. oryzae.</title>
        <authorList>
            <person name="Galagan J.E."/>
            <person name="Calvo S.E."/>
            <person name="Cuomo C."/>
            <person name="Ma L.-J."/>
            <person name="Wortman J.R."/>
            <person name="Batzoglou S."/>
            <person name="Lee S.-I."/>
            <person name="Bastuerkmen M."/>
            <person name="Spevak C.C."/>
            <person name="Clutterbuck J."/>
            <person name="Kapitonov V."/>
            <person name="Jurka J."/>
            <person name="Scazzocchio C."/>
            <person name="Farman M.L."/>
            <person name="Butler J."/>
            <person name="Purcell S."/>
            <person name="Harris S."/>
            <person name="Braus G.H."/>
            <person name="Draht O."/>
            <person name="Busch S."/>
            <person name="D'Enfert C."/>
            <person name="Bouchier C."/>
            <person name="Goldman G.H."/>
            <person name="Bell-Pedersen D."/>
            <person name="Griffiths-Jones S."/>
            <person name="Doonan J.H."/>
            <person name="Yu J."/>
            <person name="Vienken K."/>
            <person name="Pain A."/>
            <person name="Freitag M."/>
            <person name="Selker E.U."/>
            <person name="Archer D.B."/>
            <person name="Penalva M.A."/>
            <person name="Oakley B.R."/>
            <person name="Momany M."/>
            <person name="Tanaka T."/>
            <person name="Kumagai T."/>
            <person name="Asai K."/>
            <person name="Machida M."/>
            <person name="Nierman W.C."/>
            <person name="Denning D.W."/>
            <person name="Caddick M.X."/>
            <person name="Hynes M."/>
            <person name="Paoletti M."/>
            <person name="Fischer R."/>
            <person name="Miller B.L."/>
            <person name="Dyer P.S."/>
            <person name="Sachs M.S."/>
            <person name="Osmani S.A."/>
            <person name="Birren B.W."/>
        </authorList>
    </citation>
    <scope>NUCLEOTIDE SEQUENCE [LARGE SCALE GENOMIC DNA]</scope>
    <source>
        <strain>FGSC A4 / ATCC 38163 / CBS 112.46 / NRRL 194 / M139</strain>
    </source>
</reference>
<reference key="2">
    <citation type="journal article" date="2009" name="Fungal Genet. Biol.">
        <title>The 2008 update of the Aspergillus nidulans genome annotation: a community effort.</title>
        <authorList>
            <person name="Wortman J.R."/>
            <person name="Gilsenan J.M."/>
            <person name="Joardar V."/>
            <person name="Deegan J."/>
            <person name="Clutterbuck J."/>
            <person name="Andersen M.R."/>
            <person name="Archer D."/>
            <person name="Bencina M."/>
            <person name="Braus G."/>
            <person name="Coutinho P."/>
            <person name="von Dohren H."/>
            <person name="Doonan J."/>
            <person name="Driessen A.J."/>
            <person name="Durek P."/>
            <person name="Espeso E."/>
            <person name="Fekete E."/>
            <person name="Flipphi M."/>
            <person name="Estrada C.G."/>
            <person name="Geysens S."/>
            <person name="Goldman G."/>
            <person name="de Groot P.W."/>
            <person name="Hansen K."/>
            <person name="Harris S.D."/>
            <person name="Heinekamp T."/>
            <person name="Helmstaedt K."/>
            <person name="Henrissat B."/>
            <person name="Hofmann G."/>
            <person name="Homan T."/>
            <person name="Horio T."/>
            <person name="Horiuchi H."/>
            <person name="James S."/>
            <person name="Jones M."/>
            <person name="Karaffa L."/>
            <person name="Karanyi Z."/>
            <person name="Kato M."/>
            <person name="Keller N."/>
            <person name="Kelly D.E."/>
            <person name="Kiel J.A."/>
            <person name="Kim J.M."/>
            <person name="van der Klei I.J."/>
            <person name="Klis F.M."/>
            <person name="Kovalchuk A."/>
            <person name="Krasevec N."/>
            <person name="Kubicek C.P."/>
            <person name="Liu B."/>
            <person name="Maccabe A."/>
            <person name="Meyer V."/>
            <person name="Mirabito P."/>
            <person name="Miskei M."/>
            <person name="Mos M."/>
            <person name="Mullins J."/>
            <person name="Nelson D.R."/>
            <person name="Nielsen J."/>
            <person name="Oakley B.R."/>
            <person name="Osmani S.A."/>
            <person name="Pakula T."/>
            <person name="Paszewski A."/>
            <person name="Paulsen I."/>
            <person name="Pilsyk S."/>
            <person name="Pocsi I."/>
            <person name="Punt P.J."/>
            <person name="Ram A.F."/>
            <person name="Ren Q."/>
            <person name="Robellet X."/>
            <person name="Robson G."/>
            <person name="Seiboth B."/>
            <person name="van Solingen P."/>
            <person name="Specht T."/>
            <person name="Sun J."/>
            <person name="Taheri-Talesh N."/>
            <person name="Takeshita N."/>
            <person name="Ussery D."/>
            <person name="vanKuyk P.A."/>
            <person name="Visser H."/>
            <person name="van de Vondervoort P.J."/>
            <person name="de Vries R.P."/>
            <person name="Walton J."/>
            <person name="Xiang X."/>
            <person name="Xiong Y."/>
            <person name="Zeng A.P."/>
            <person name="Brandt B.W."/>
            <person name="Cornell M.J."/>
            <person name="van den Hondel C.A."/>
            <person name="Visser J."/>
            <person name="Oliver S.G."/>
            <person name="Turner G."/>
        </authorList>
    </citation>
    <scope>GENOME REANNOTATION</scope>
    <source>
        <strain>FGSC A4 / ATCC 38163 / CBS 112.46 / NRRL 194 / M139</strain>
    </source>
</reference>
<reference key="3">
    <citation type="journal article" date="2012" name="J. Am. Chem. Soc.">
        <title>Illuminating the diversity of aromatic polyketide synthases in Aspergillus nidulans.</title>
        <authorList>
            <person name="Ahuja M."/>
            <person name="Chiang Y.M."/>
            <person name="Chang S.L."/>
            <person name="Praseuth M.B."/>
            <person name="Entwistle R."/>
            <person name="Sanchez J.F."/>
            <person name="Lo H.C."/>
            <person name="Yeh H.H."/>
            <person name="Oakley B.R."/>
            <person name="Wang C.C."/>
        </authorList>
    </citation>
    <scope>IDENTIFICATION</scope>
    <scope>FUNCTION</scope>
</reference>
<reference key="4">
    <citation type="journal article" date="2024" name="J. Nat. Prod.">
        <title>Transcription Factor Engineering in Aspergillus nidulans Leads to the Discovery of an Orsellinaldehyde Derivative Produced via an Unlinked Polyketide Synthase Gene.</title>
        <authorList>
            <person name="Rabot C."/>
            <person name="Grau M.F."/>
            <person name="Entwistle R."/>
            <person name="Chiang Y.M."/>
            <person name="Zamora de Roberts Y."/>
            <person name="Ahuja M."/>
            <person name="Oakley C.E."/>
            <person name="Wang C.C.C."/>
            <person name="Todd R.B."/>
            <person name="Oakley B.R."/>
        </authorList>
    </citation>
    <scope>FUNCTION</scope>
</reference>
<dbReference type="EMBL" id="BN001301">
    <property type="protein sequence ID" value="CBF71461.1"/>
    <property type="molecule type" value="Genomic_DNA"/>
</dbReference>
<dbReference type="RefSeq" id="XP_664392.1">
    <property type="nucleotide sequence ID" value="XM_659300.1"/>
</dbReference>
<dbReference type="EnsemblFungi" id="CBF71461">
    <property type="protein sequence ID" value="CBF71461"/>
    <property type="gene ID" value="ANIA_06788"/>
</dbReference>
<dbReference type="GeneID" id="2870315"/>
<dbReference type="KEGG" id="ani:ANIA_06788"/>
<dbReference type="eggNOG" id="ENOG502SH49">
    <property type="taxonomic scope" value="Eukaryota"/>
</dbReference>
<dbReference type="HOGENOM" id="CLU_011017_3_1_1"/>
<dbReference type="InParanoid" id="Q5AY42"/>
<dbReference type="OMA" id="FWVAYCF"/>
<dbReference type="OrthoDB" id="3037908at2759"/>
<dbReference type="Proteomes" id="UP000000560">
    <property type="component" value="Chromosome I"/>
</dbReference>
<dbReference type="GO" id="GO:0005634">
    <property type="term" value="C:nucleus"/>
    <property type="evidence" value="ECO:0007669"/>
    <property type="project" value="UniProtKB-SubCell"/>
</dbReference>
<dbReference type="GO" id="GO:0003677">
    <property type="term" value="F:DNA binding"/>
    <property type="evidence" value="ECO:0007669"/>
    <property type="project" value="UniProtKB-KW"/>
</dbReference>
<dbReference type="GO" id="GO:0000981">
    <property type="term" value="F:DNA-binding transcription factor activity, RNA polymerase II-specific"/>
    <property type="evidence" value="ECO:0007669"/>
    <property type="project" value="InterPro"/>
</dbReference>
<dbReference type="GO" id="GO:0008270">
    <property type="term" value="F:zinc ion binding"/>
    <property type="evidence" value="ECO:0007669"/>
    <property type="project" value="InterPro"/>
</dbReference>
<dbReference type="GO" id="GO:0006351">
    <property type="term" value="P:DNA-templated transcription"/>
    <property type="evidence" value="ECO:0007669"/>
    <property type="project" value="InterPro"/>
</dbReference>
<dbReference type="CDD" id="cd12148">
    <property type="entry name" value="fungal_TF_MHR"/>
    <property type="match status" value="1"/>
</dbReference>
<dbReference type="CDD" id="cd00067">
    <property type="entry name" value="GAL4"/>
    <property type="match status" value="1"/>
</dbReference>
<dbReference type="Gene3D" id="4.10.240.10">
    <property type="entry name" value="Zn(2)-C6 fungal-type DNA-binding domain"/>
    <property type="match status" value="1"/>
</dbReference>
<dbReference type="InterPro" id="IPR050815">
    <property type="entry name" value="TF_fung"/>
</dbReference>
<dbReference type="InterPro" id="IPR007219">
    <property type="entry name" value="Transcription_factor_dom_fun"/>
</dbReference>
<dbReference type="InterPro" id="IPR036864">
    <property type="entry name" value="Zn2-C6_fun-type_DNA-bd_sf"/>
</dbReference>
<dbReference type="InterPro" id="IPR001138">
    <property type="entry name" value="Zn2Cys6_DnaBD"/>
</dbReference>
<dbReference type="PANTHER" id="PTHR47338:SF3">
    <property type="entry name" value="C6 FINGER DOMAIN TRANSCRIPTION FACTOR DBAA-RELATED"/>
    <property type="match status" value="1"/>
</dbReference>
<dbReference type="PANTHER" id="PTHR47338">
    <property type="entry name" value="ZN(II)2CYS6 TRANSCRIPTION FACTOR (EUROFUNG)-RELATED"/>
    <property type="match status" value="1"/>
</dbReference>
<dbReference type="Pfam" id="PF04082">
    <property type="entry name" value="Fungal_trans"/>
    <property type="match status" value="1"/>
</dbReference>
<dbReference type="Pfam" id="PF00172">
    <property type="entry name" value="Zn_clus"/>
    <property type="match status" value="1"/>
</dbReference>
<dbReference type="SMART" id="SM00906">
    <property type="entry name" value="Fungal_trans"/>
    <property type="match status" value="1"/>
</dbReference>
<dbReference type="SMART" id="SM00066">
    <property type="entry name" value="GAL4"/>
    <property type="match status" value="1"/>
</dbReference>
<dbReference type="SUPFAM" id="SSF57701">
    <property type="entry name" value="Zn2/Cys6 DNA-binding domain"/>
    <property type="match status" value="1"/>
</dbReference>
<dbReference type="PROSITE" id="PS00463">
    <property type="entry name" value="ZN2_CY6_FUNGAL_1"/>
    <property type="match status" value="1"/>
</dbReference>
<dbReference type="PROSITE" id="PS50048">
    <property type="entry name" value="ZN2_CY6_FUNGAL_2"/>
    <property type="match status" value="1"/>
</dbReference>
<keyword id="KW-0238">DNA-binding</keyword>
<keyword id="KW-0479">Metal-binding</keyword>
<keyword id="KW-0539">Nucleus</keyword>
<keyword id="KW-1185">Reference proteome</keyword>
<keyword id="KW-0804">Transcription</keyword>
<keyword id="KW-0805">Transcription regulation</keyword>
<organism>
    <name type="scientific">Emericella nidulans (strain FGSC A4 / ATCC 38163 / CBS 112.46 / NRRL 194 / M139)</name>
    <name type="common">Aspergillus nidulans</name>
    <dbReference type="NCBI Taxonomy" id="227321"/>
    <lineage>
        <taxon>Eukaryota</taxon>
        <taxon>Fungi</taxon>
        <taxon>Dikarya</taxon>
        <taxon>Ascomycota</taxon>
        <taxon>Pezizomycotina</taxon>
        <taxon>Eurotiomycetes</taxon>
        <taxon>Eurotiomycetidae</taxon>
        <taxon>Eurotiales</taxon>
        <taxon>Aspergillaceae</taxon>
        <taxon>Aspergillus</taxon>
        <taxon>Aspergillus subgen. Nidulantes</taxon>
    </lineage>
</organism>
<gene>
    <name type="ORF">AN6788</name>
    <name type="ORF">ANIA_06788</name>
</gene>
<sequence length="645" mass="72847">MPQKAQPQPRESPFKPARQQPGLACEECRKRKARCDRAKPQCGSCMMTGRVCVVNHNRPRRGPKKGQIESLYSRLGRFIHGSLCISCWKAGMLTVTEVLEEQVIEQMEHIYHPDFEPNSHPRHSQSHDRRQQSGPDSSPDTQHELPFLQSPPAARDADSAERALLPSPVSPVRAMTAQELSYARTGSNPTQNPGLDLILADLDQLYFDRVHPIAPFLHQQRHLSQREAESSVLARACLRSAMRTVAAAMSAQYRRFADSLYIETSRVVQELDTIERTPSLKQIQAVLLLAHYELLRMEENRALATVGRCFRLIQLARLQDTDPSTDAGAGRDFVKEEETRRTFWVAYCFDRFLTSRNEWPFTLQEEAIWIRLPVSESAFQIPRPPEQPMDYLHEAIASSGQKTLPPFAEYIVLATLHGRTMNLRRSALLLSTSTEASMFWERHRALSDIVEKRSALWSYSPSATTPLVTADPLTAFTCLLEKTLIIYLGKVGQTAREQLGGMSERRLIENANSAVQNLATSEQETLMNCHSHSRSFDIGTGGRGGHASGGLQRSAQTAAEFVALAKFMCPVNCFRICSDKSVRRLTLSFQMQYPAQQSFLLRMEMPPRLEKYGMNVGERGTGRIRAIDHASRLKVDERRAVRAYL</sequence>
<name>TF88_EMENI</name>